<accession>A7ZIW5</accession>
<organism>
    <name type="scientific">Escherichia coli O139:H28 (strain E24377A / ETEC)</name>
    <dbReference type="NCBI Taxonomy" id="331111"/>
    <lineage>
        <taxon>Bacteria</taxon>
        <taxon>Pseudomonadati</taxon>
        <taxon>Pseudomonadota</taxon>
        <taxon>Gammaproteobacteria</taxon>
        <taxon>Enterobacterales</taxon>
        <taxon>Enterobacteriaceae</taxon>
        <taxon>Escherichia</taxon>
    </lineage>
</organism>
<name>GCS2_ECO24</name>
<comment type="function">
    <text evidence="1">ATP-dependent carboxylate-amine ligase which exhibits weak glutamate--cysteine ligase activity.</text>
</comment>
<comment type="catalytic activity">
    <reaction evidence="1">
        <text>L-cysteine + L-glutamate + ATP = gamma-L-glutamyl-L-cysteine + ADP + phosphate + H(+)</text>
        <dbReference type="Rhea" id="RHEA:13285"/>
        <dbReference type="ChEBI" id="CHEBI:15378"/>
        <dbReference type="ChEBI" id="CHEBI:29985"/>
        <dbReference type="ChEBI" id="CHEBI:30616"/>
        <dbReference type="ChEBI" id="CHEBI:35235"/>
        <dbReference type="ChEBI" id="CHEBI:43474"/>
        <dbReference type="ChEBI" id="CHEBI:58173"/>
        <dbReference type="ChEBI" id="CHEBI:456216"/>
        <dbReference type="EC" id="6.3.2.2"/>
    </reaction>
</comment>
<comment type="subunit">
    <text evidence="1">Homodimer.</text>
</comment>
<comment type="similarity">
    <text evidence="1">Belongs to the glutamate--cysteine ligase type 2 family. YbdK subfamily.</text>
</comment>
<dbReference type="EC" id="6.3.2.2" evidence="1"/>
<dbReference type="EMBL" id="CP000800">
    <property type="protein sequence ID" value="ABV19257.1"/>
    <property type="molecule type" value="Genomic_DNA"/>
</dbReference>
<dbReference type="RefSeq" id="WP_001130639.1">
    <property type="nucleotide sequence ID" value="NC_009801.1"/>
</dbReference>
<dbReference type="SMR" id="A7ZIW5"/>
<dbReference type="KEGG" id="ecw:EcE24377A_0600"/>
<dbReference type="HOGENOM" id="CLU_044848_1_1_6"/>
<dbReference type="Proteomes" id="UP000001122">
    <property type="component" value="Chromosome"/>
</dbReference>
<dbReference type="GO" id="GO:0005524">
    <property type="term" value="F:ATP binding"/>
    <property type="evidence" value="ECO:0007669"/>
    <property type="project" value="UniProtKB-KW"/>
</dbReference>
<dbReference type="GO" id="GO:0004357">
    <property type="term" value="F:glutamate-cysteine ligase activity"/>
    <property type="evidence" value="ECO:0007669"/>
    <property type="project" value="UniProtKB-EC"/>
</dbReference>
<dbReference type="GO" id="GO:0042398">
    <property type="term" value="P:modified amino acid biosynthetic process"/>
    <property type="evidence" value="ECO:0007669"/>
    <property type="project" value="InterPro"/>
</dbReference>
<dbReference type="FunFam" id="3.30.590.20:FF:000002">
    <property type="entry name" value="Putative glutamate--cysteine ligase 2"/>
    <property type="match status" value="1"/>
</dbReference>
<dbReference type="Gene3D" id="3.30.590.20">
    <property type="match status" value="1"/>
</dbReference>
<dbReference type="HAMAP" id="MF_01609">
    <property type="entry name" value="Glu_cys_ligase_2"/>
    <property type="match status" value="1"/>
</dbReference>
<dbReference type="InterPro" id="IPR050141">
    <property type="entry name" value="GCL_type2/YbdK_subfam"/>
</dbReference>
<dbReference type="InterPro" id="IPR006336">
    <property type="entry name" value="GCS2"/>
</dbReference>
<dbReference type="InterPro" id="IPR014746">
    <property type="entry name" value="Gln_synth/guanido_kin_cat_dom"/>
</dbReference>
<dbReference type="InterPro" id="IPR011793">
    <property type="entry name" value="YbdK"/>
</dbReference>
<dbReference type="NCBIfam" id="TIGR02050">
    <property type="entry name" value="gshA_cyan_rel"/>
    <property type="match status" value="1"/>
</dbReference>
<dbReference type="NCBIfam" id="NF010040">
    <property type="entry name" value="PRK13516.1"/>
    <property type="match status" value="1"/>
</dbReference>
<dbReference type="PANTHER" id="PTHR36510">
    <property type="entry name" value="GLUTAMATE--CYSTEINE LIGASE 2-RELATED"/>
    <property type="match status" value="1"/>
</dbReference>
<dbReference type="PANTHER" id="PTHR36510:SF1">
    <property type="entry name" value="GLUTAMATE--CYSTEINE LIGASE 2-RELATED"/>
    <property type="match status" value="1"/>
</dbReference>
<dbReference type="Pfam" id="PF04107">
    <property type="entry name" value="GCS2"/>
    <property type="match status" value="1"/>
</dbReference>
<dbReference type="SUPFAM" id="SSF55931">
    <property type="entry name" value="Glutamine synthetase/guanido kinase"/>
    <property type="match status" value="1"/>
</dbReference>
<gene>
    <name type="primary">ybdK</name>
    <name type="ordered locus">EcE24377A_0600</name>
</gene>
<evidence type="ECO:0000255" key="1">
    <source>
        <dbReference type="HAMAP-Rule" id="MF_01609"/>
    </source>
</evidence>
<proteinExistence type="inferred from homology"/>
<sequence>MPLPDFHVSEPFTLGIELEMQVVNPPGYDLSQDSSMLIDAVKNKITAGEVKHDITESMLELATDVCRDINQAAGQFSAMQKVVLQAAADHHLEICGGGTHPFQKWQRQEVCDNERYQRTLENFGYLIQQATVFGQHVHVGCASGDDAIYLLHGLSRFVPHFIALSAASPYMQGTDTRFASSRPNIFSAFPDNGPMPWVSNWQQFEALFRCLSYTTMIDSIKDLHWDIRPSPHFGTVEVRVMDTPLTLSHAVNMAGLIQATAHWLLTERPFKHQEKDYLLYKFNRFQACRYGLEGVITDPHTGDRRPLTEDTLRLLEKIAPSAHKMGASSAIEALHRQVVSGLNEAQLMRDFVADGGSLIGLVKKHCEIWAGD</sequence>
<keyword id="KW-0067">ATP-binding</keyword>
<keyword id="KW-0436">Ligase</keyword>
<keyword id="KW-0547">Nucleotide-binding</keyword>
<keyword id="KW-1185">Reference proteome</keyword>
<feature type="chain" id="PRO_1000069434" description="Putative glutamate--cysteine ligase 2">
    <location>
        <begin position="1"/>
        <end position="372"/>
    </location>
</feature>
<reference key="1">
    <citation type="journal article" date="2008" name="J. Bacteriol.">
        <title>The pangenome structure of Escherichia coli: comparative genomic analysis of E. coli commensal and pathogenic isolates.</title>
        <authorList>
            <person name="Rasko D.A."/>
            <person name="Rosovitz M.J."/>
            <person name="Myers G.S.A."/>
            <person name="Mongodin E.F."/>
            <person name="Fricke W.F."/>
            <person name="Gajer P."/>
            <person name="Crabtree J."/>
            <person name="Sebaihia M."/>
            <person name="Thomson N.R."/>
            <person name="Chaudhuri R."/>
            <person name="Henderson I.R."/>
            <person name="Sperandio V."/>
            <person name="Ravel J."/>
        </authorList>
    </citation>
    <scope>NUCLEOTIDE SEQUENCE [LARGE SCALE GENOMIC DNA]</scope>
    <source>
        <strain>E24377A / ETEC</strain>
    </source>
</reference>
<protein>
    <recommendedName>
        <fullName evidence="1">Putative glutamate--cysteine ligase 2</fullName>
        <ecNumber evidence="1">6.3.2.2</ecNumber>
    </recommendedName>
    <alternativeName>
        <fullName evidence="1">Gamma-glutamylcysteine synthetase 2</fullName>
        <shortName evidence="1">GCS 2</shortName>
        <shortName evidence="1">Gamma-GCS 2</shortName>
    </alternativeName>
</protein>